<reference key="1">
    <citation type="submission" date="2007-02" db="EMBL/GenBank/DDBJ databases">
        <title>Complete sequence of Mycobacterium sp. JLS.</title>
        <authorList>
            <consortium name="US DOE Joint Genome Institute"/>
            <person name="Copeland A."/>
            <person name="Lucas S."/>
            <person name="Lapidus A."/>
            <person name="Barry K."/>
            <person name="Detter J.C."/>
            <person name="Glavina del Rio T."/>
            <person name="Hammon N."/>
            <person name="Israni S."/>
            <person name="Dalin E."/>
            <person name="Tice H."/>
            <person name="Pitluck S."/>
            <person name="Chain P."/>
            <person name="Malfatti S."/>
            <person name="Shin M."/>
            <person name="Vergez L."/>
            <person name="Schmutz J."/>
            <person name="Larimer F."/>
            <person name="Land M."/>
            <person name="Hauser L."/>
            <person name="Kyrpides N."/>
            <person name="Mikhailova N."/>
            <person name="Miller C.D."/>
            <person name="Anderson A.J."/>
            <person name="Sims R.C."/>
            <person name="Richardson P."/>
        </authorList>
    </citation>
    <scope>NUCLEOTIDE SEQUENCE [LARGE SCALE GENOMIC DNA]</scope>
    <source>
        <strain>JLS</strain>
    </source>
</reference>
<accession>A3PVL6</accession>
<gene>
    <name evidence="1" type="primary">rpsK</name>
    <name type="ordered locus">Mjls_1140</name>
</gene>
<keyword id="KW-0687">Ribonucleoprotein</keyword>
<keyword id="KW-0689">Ribosomal protein</keyword>
<keyword id="KW-0694">RNA-binding</keyword>
<keyword id="KW-0699">rRNA-binding</keyword>
<proteinExistence type="inferred from homology"/>
<feature type="chain" id="PRO_0000294797" description="Small ribosomal subunit protein uS11">
    <location>
        <begin position="1"/>
        <end position="138"/>
    </location>
</feature>
<feature type="region of interest" description="Disordered" evidence="2">
    <location>
        <begin position="1"/>
        <end position="28"/>
    </location>
</feature>
<feature type="compositionally biased region" description="Low complexity" evidence="2">
    <location>
        <begin position="1"/>
        <end position="12"/>
    </location>
</feature>
<feature type="compositionally biased region" description="Basic residues" evidence="2">
    <location>
        <begin position="13"/>
        <end position="22"/>
    </location>
</feature>
<organism>
    <name type="scientific">Mycobacterium sp. (strain JLS)</name>
    <dbReference type="NCBI Taxonomy" id="164757"/>
    <lineage>
        <taxon>Bacteria</taxon>
        <taxon>Bacillati</taxon>
        <taxon>Actinomycetota</taxon>
        <taxon>Actinomycetes</taxon>
        <taxon>Mycobacteriales</taxon>
        <taxon>Mycobacteriaceae</taxon>
        <taxon>Mycobacterium</taxon>
    </lineage>
</organism>
<name>RS11_MYCSJ</name>
<comment type="function">
    <text evidence="1">Located on the platform of the 30S subunit, it bridges several disparate RNA helices of the 16S rRNA. Forms part of the Shine-Dalgarno cleft in the 70S ribosome.</text>
</comment>
<comment type="subunit">
    <text evidence="1">Part of the 30S ribosomal subunit. Interacts with proteins S7 and S18. Binds to IF-3.</text>
</comment>
<comment type="similarity">
    <text evidence="1">Belongs to the universal ribosomal protein uS11 family.</text>
</comment>
<dbReference type="EMBL" id="CP000580">
    <property type="protein sequence ID" value="ABN96943.1"/>
    <property type="molecule type" value="Genomic_DNA"/>
</dbReference>
<dbReference type="SMR" id="A3PVL6"/>
<dbReference type="KEGG" id="mjl:Mjls_1140"/>
<dbReference type="HOGENOM" id="CLU_072439_5_0_11"/>
<dbReference type="BioCyc" id="MSP164757:G1G8C-1152-MONOMER"/>
<dbReference type="GO" id="GO:1990904">
    <property type="term" value="C:ribonucleoprotein complex"/>
    <property type="evidence" value="ECO:0007669"/>
    <property type="project" value="UniProtKB-KW"/>
</dbReference>
<dbReference type="GO" id="GO:0005840">
    <property type="term" value="C:ribosome"/>
    <property type="evidence" value="ECO:0007669"/>
    <property type="project" value="UniProtKB-KW"/>
</dbReference>
<dbReference type="GO" id="GO:0019843">
    <property type="term" value="F:rRNA binding"/>
    <property type="evidence" value="ECO:0007669"/>
    <property type="project" value="UniProtKB-UniRule"/>
</dbReference>
<dbReference type="GO" id="GO:0003735">
    <property type="term" value="F:structural constituent of ribosome"/>
    <property type="evidence" value="ECO:0007669"/>
    <property type="project" value="InterPro"/>
</dbReference>
<dbReference type="GO" id="GO:0006412">
    <property type="term" value="P:translation"/>
    <property type="evidence" value="ECO:0007669"/>
    <property type="project" value="UniProtKB-UniRule"/>
</dbReference>
<dbReference type="FunFam" id="3.30.420.80:FF:000001">
    <property type="entry name" value="30S ribosomal protein S11"/>
    <property type="match status" value="1"/>
</dbReference>
<dbReference type="Gene3D" id="3.30.420.80">
    <property type="entry name" value="Ribosomal protein S11"/>
    <property type="match status" value="1"/>
</dbReference>
<dbReference type="HAMAP" id="MF_01310">
    <property type="entry name" value="Ribosomal_uS11"/>
    <property type="match status" value="1"/>
</dbReference>
<dbReference type="InterPro" id="IPR001971">
    <property type="entry name" value="Ribosomal_uS11"/>
</dbReference>
<dbReference type="InterPro" id="IPR019981">
    <property type="entry name" value="Ribosomal_uS11_bac-type"/>
</dbReference>
<dbReference type="InterPro" id="IPR018102">
    <property type="entry name" value="Ribosomal_uS11_CS"/>
</dbReference>
<dbReference type="InterPro" id="IPR036967">
    <property type="entry name" value="Ribosomal_uS11_sf"/>
</dbReference>
<dbReference type="NCBIfam" id="NF003698">
    <property type="entry name" value="PRK05309.1"/>
    <property type="match status" value="1"/>
</dbReference>
<dbReference type="NCBIfam" id="TIGR03632">
    <property type="entry name" value="uS11_bact"/>
    <property type="match status" value="1"/>
</dbReference>
<dbReference type="PANTHER" id="PTHR11759">
    <property type="entry name" value="40S RIBOSOMAL PROTEIN S14/30S RIBOSOMAL PROTEIN S11"/>
    <property type="match status" value="1"/>
</dbReference>
<dbReference type="Pfam" id="PF00411">
    <property type="entry name" value="Ribosomal_S11"/>
    <property type="match status" value="1"/>
</dbReference>
<dbReference type="PIRSF" id="PIRSF002131">
    <property type="entry name" value="Ribosomal_S11"/>
    <property type="match status" value="1"/>
</dbReference>
<dbReference type="SUPFAM" id="SSF53137">
    <property type="entry name" value="Translational machinery components"/>
    <property type="match status" value="1"/>
</dbReference>
<dbReference type="PROSITE" id="PS00054">
    <property type="entry name" value="RIBOSOMAL_S11"/>
    <property type="match status" value="1"/>
</dbReference>
<evidence type="ECO:0000255" key="1">
    <source>
        <dbReference type="HAMAP-Rule" id="MF_01310"/>
    </source>
</evidence>
<evidence type="ECO:0000256" key="2">
    <source>
        <dbReference type="SAM" id="MobiDB-lite"/>
    </source>
</evidence>
<evidence type="ECO:0000305" key="3"/>
<sequence length="138" mass="14620">MPPKKAAASSAKKGQKTRRREKKNVPHGAAHIKSTFNNTIVSITDPQGNVIAWASSGHVGFKGSRKSTPFAAQLAAENAARKAQEHGVKKVDVFVKGPGSGRETAIRSLQAAGLEVGAIADVTPQPHNGCRPPKRRRV</sequence>
<protein>
    <recommendedName>
        <fullName evidence="1">Small ribosomal subunit protein uS11</fullName>
    </recommendedName>
    <alternativeName>
        <fullName evidence="3">30S ribosomal protein S11</fullName>
    </alternativeName>
</protein>